<gene>
    <name evidence="2" type="primary">matK</name>
    <name type="synonym">ycf14</name>
</gene>
<keyword id="KW-0150">Chloroplast</keyword>
<keyword id="KW-0507">mRNA processing</keyword>
<keyword id="KW-0934">Plastid</keyword>
<keyword id="KW-1185">Reference proteome</keyword>
<keyword id="KW-0691">RNA editing</keyword>
<keyword id="KW-0694">RNA-binding</keyword>
<keyword id="KW-0819">tRNA processing</keyword>
<evidence type="ECO:0000250" key="1"/>
<evidence type="ECO:0000255" key="2">
    <source>
        <dbReference type="HAMAP-Rule" id="MF_01390"/>
    </source>
</evidence>
<evidence type="ECO:0000305" key="3"/>
<dbReference type="EMBL" id="X15901">
    <property type="protein sequence ID" value="CAA34008.1"/>
    <property type="status" value="ALT_SEQ"/>
    <property type="molecule type" value="Genomic_DNA"/>
</dbReference>
<dbReference type="EMBL" id="AY522330">
    <property type="protein sequence ID" value="AAS46105.1"/>
    <property type="status" value="ALT_SEQ"/>
    <property type="molecule type" value="Genomic_DNA"/>
</dbReference>
<dbReference type="PIR" id="JQ0201">
    <property type="entry name" value="JQ0201"/>
</dbReference>
<dbReference type="RefSeq" id="NP_039361.2">
    <property type="nucleotide sequence ID" value="NC_001320.1"/>
</dbReference>
<dbReference type="FunCoup" id="P0C383">
    <property type="interactions" value="1"/>
</dbReference>
<dbReference type="STRING" id="39947.P0C383"/>
<dbReference type="PaxDb" id="39947-P0C383"/>
<dbReference type="GeneID" id="3131450"/>
<dbReference type="KEGG" id="dosa:tRNA-Lys__UUU"/>
<dbReference type="KEGG" id="osa:3131450"/>
<dbReference type="InParanoid" id="P0C383"/>
<dbReference type="OrthoDB" id="597045at2759"/>
<dbReference type="Proteomes" id="UP000059680">
    <property type="component" value="Chloroplast"/>
</dbReference>
<dbReference type="GO" id="GO:0009507">
    <property type="term" value="C:chloroplast"/>
    <property type="evidence" value="ECO:0007669"/>
    <property type="project" value="UniProtKB-SubCell"/>
</dbReference>
<dbReference type="GO" id="GO:0009536">
    <property type="term" value="C:plastid"/>
    <property type="evidence" value="ECO:0000305"/>
    <property type="project" value="Gramene"/>
</dbReference>
<dbReference type="GO" id="GO:0003723">
    <property type="term" value="F:RNA binding"/>
    <property type="evidence" value="ECO:0007669"/>
    <property type="project" value="UniProtKB-KW"/>
</dbReference>
<dbReference type="GO" id="GO:0006397">
    <property type="term" value="P:mRNA processing"/>
    <property type="evidence" value="ECO:0007669"/>
    <property type="project" value="UniProtKB-KW"/>
</dbReference>
<dbReference type="GO" id="GO:0008380">
    <property type="term" value="P:RNA splicing"/>
    <property type="evidence" value="ECO:0007669"/>
    <property type="project" value="UniProtKB-UniRule"/>
</dbReference>
<dbReference type="GO" id="GO:0008033">
    <property type="term" value="P:tRNA processing"/>
    <property type="evidence" value="ECO:0007669"/>
    <property type="project" value="UniProtKB-KW"/>
</dbReference>
<dbReference type="HAMAP" id="MF_01390">
    <property type="entry name" value="MatK"/>
    <property type="match status" value="1"/>
</dbReference>
<dbReference type="InterPro" id="IPR024937">
    <property type="entry name" value="Domain_X"/>
</dbReference>
<dbReference type="InterPro" id="IPR002866">
    <property type="entry name" value="Maturase_MatK"/>
</dbReference>
<dbReference type="InterPro" id="IPR024942">
    <property type="entry name" value="Maturase_MatK_N"/>
</dbReference>
<dbReference type="PANTHER" id="PTHR34811">
    <property type="entry name" value="MATURASE K"/>
    <property type="match status" value="1"/>
</dbReference>
<dbReference type="PANTHER" id="PTHR34811:SF1">
    <property type="entry name" value="MATURASE K"/>
    <property type="match status" value="1"/>
</dbReference>
<dbReference type="Pfam" id="PF01348">
    <property type="entry name" value="Intron_maturas2"/>
    <property type="match status" value="1"/>
</dbReference>
<dbReference type="Pfam" id="PF01824">
    <property type="entry name" value="MatK_N"/>
    <property type="match status" value="1"/>
</dbReference>
<accession>P0C383</accession>
<accession>P12175</accession>
<accession>Q6QY26</accession>
<accession>Q6QY89</accession>
<sequence length="511" mass="61429">MEKFEGYSEKLKFPRQYFVYPLLFQEYIYVFAHDYGLNGSELVEIIGSNNKKFSSLLVKRLMIRMYQQNFWINLVNHPNQDRLLDYNNFFYSEFYSQILSEGFAIVVEIPFSLREQSCPEEKEIPKFQNLRSIHSIFPFLEDKFLHLHYLAHIEIPYPIHLDILLQLLQYRIQDVPSLHLLRFFLNYYSNWNSFITSMKSIFILKKENKRLFRFLYNSYVSEYEFFLLFLRKQSSCLRLTSSGTFLERIIFSRKMEHFGLMYPAFFRKTIWFVMDPLMHYVRYQGKAILASKGTLLLKKKWKCYLVRLWQYSFSFWTQPQRIHLNQLENSCFDFLGYFSSVPINSLLVRNQMLENSFLIDTQMKKFDTKVPVTPLIGSLAKAQFCTGSGHPISKPIWTDLSDWDILDRFGRICRNLFHYYSGSSKKKTLYRLKYILRLSCARTLARKHKSTVRAFMQWLGSVFLEEFFTEEEQVFSLMFAKTTYFSFRGSHSERIWYLDILRINDLVNPLN</sequence>
<name>MATK_ORYSJ</name>
<geneLocation type="chloroplast"/>
<reference key="1">
    <citation type="journal article" date="1989" name="Mol. Gen. Genet.">
        <title>The complete sequence of the rice (Oryza sativa) chloroplast genome: intermolecular recombination between distinct tRNA genes accounts for a major plastid DNA inversion during the evolution of the cereals.</title>
        <authorList>
            <person name="Hiratsuka J."/>
            <person name="Shimada H."/>
            <person name="Whittier R."/>
            <person name="Ishibashi T."/>
            <person name="Sakamoto M."/>
            <person name="Mori M."/>
            <person name="Kondo C."/>
            <person name="Honji Y."/>
            <person name="Sun C.-R."/>
            <person name="Meng B.-Y."/>
            <person name="Li Y.-Q."/>
            <person name="Kanno A."/>
            <person name="Nishizawa Y."/>
            <person name="Hirai A."/>
            <person name="Shinozaki K."/>
            <person name="Sugiura M."/>
        </authorList>
    </citation>
    <scope>NUCLEOTIDE SEQUENCE [LARGE SCALE GENOMIC DNA]</scope>
    <source>
        <strain>cv. Nipponbare</strain>
    </source>
</reference>
<reference key="2">
    <citation type="journal article" date="2004" name="Plant Physiol.">
        <title>A comparison of rice chloroplast genomes.</title>
        <authorList>
            <person name="Tang J."/>
            <person name="Xia H."/>
            <person name="Cao M."/>
            <person name="Zhang X."/>
            <person name="Zeng W."/>
            <person name="Hu S."/>
            <person name="Tong W."/>
            <person name="Wang J."/>
            <person name="Wang J."/>
            <person name="Yu J."/>
            <person name="Yang H."/>
            <person name="Zhu L."/>
        </authorList>
    </citation>
    <scope>NUCLEOTIDE SEQUENCE [LARGE SCALE GENOMIC DNA]</scope>
    <source>
        <strain>cv. Nipponbare</strain>
    </source>
</reference>
<feature type="chain" id="PRO_0000289033" description="Maturase K">
    <location>
        <begin position="1"/>
        <end position="511"/>
    </location>
</feature>
<organism>
    <name type="scientific">Oryza sativa subsp. japonica</name>
    <name type="common">Rice</name>
    <dbReference type="NCBI Taxonomy" id="39947"/>
    <lineage>
        <taxon>Eukaryota</taxon>
        <taxon>Viridiplantae</taxon>
        <taxon>Streptophyta</taxon>
        <taxon>Embryophyta</taxon>
        <taxon>Tracheophyta</taxon>
        <taxon>Spermatophyta</taxon>
        <taxon>Magnoliopsida</taxon>
        <taxon>Liliopsida</taxon>
        <taxon>Poales</taxon>
        <taxon>Poaceae</taxon>
        <taxon>BOP clade</taxon>
        <taxon>Oryzoideae</taxon>
        <taxon>Oryzeae</taxon>
        <taxon>Oryzinae</taxon>
        <taxon>Oryza</taxon>
        <taxon>Oryza sativa</taxon>
    </lineage>
</organism>
<comment type="function">
    <text evidence="2">Usually encoded in the trnK tRNA gene intron. Probably assists in splicing its own and other chloroplast group II introns.</text>
</comment>
<comment type="subcellular location">
    <subcellularLocation>
        <location>Plastid</location>
        <location>Chloroplast</location>
    </subcellularLocation>
</comment>
<comment type="RNA editing">
    <location>
        <position position="420" evidence="1"/>
    </location>
</comment>
<comment type="similarity">
    <text evidence="2">Belongs to the intron maturase 2 family. MatK subfamily.</text>
</comment>
<comment type="sequence caution" evidence="3">
    <conflict type="erroneous initiation">
        <sequence resource="EMBL-CDS" id="AAS46105"/>
    </conflict>
    <text>Extended N-terminus.</text>
</comment>
<comment type="sequence caution" evidence="3">
    <conflict type="erroneous initiation">
        <sequence resource="EMBL-CDS" id="CAA34008"/>
    </conflict>
    <text>Extended N-terminus.</text>
</comment>
<proteinExistence type="inferred from homology"/>
<protein>
    <recommendedName>
        <fullName evidence="2">Maturase K</fullName>
    </recommendedName>
    <alternativeName>
        <fullName evidence="2">Intron maturase</fullName>
    </alternativeName>
</protein>